<organism>
    <name type="scientific">Musca domestica</name>
    <name type="common">House fly</name>
    <dbReference type="NCBI Taxonomy" id="7370"/>
    <lineage>
        <taxon>Eukaryota</taxon>
        <taxon>Metazoa</taxon>
        <taxon>Ecdysozoa</taxon>
        <taxon>Arthropoda</taxon>
        <taxon>Hexapoda</taxon>
        <taxon>Insecta</taxon>
        <taxon>Pterygota</taxon>
        <taxon>Neoptera</taxon>
        <taxon>Endopterygota</taxon>
        <taxon>Diptera</taxon>
        <taxon>Brachycera</taxon>
        <taxon>Muscomorpha</taxon>
        <taxon>Muscoidea</taxon>
        <taxon>Muscidae</taxon>
        <taxon>Musca</taxon>
    </lineage>
</organism>
<proteinExistence type="evidence at protein level"/>
<keyword id="KW-0903">Direct protein sequencing</keyword>
<keyword id="KW-0256">Endoplasmic reticulum</keyword>
<keyword id="KW-0349">Heme</keyword>
<keyword id="KW-0408">Iron</keyword>
<keyword id="KW-0472">Membrane</keyword>
<keyword id="KW-0479">Metal-binding</keyword>
<keyword id="KW-0492">Microsome</keyword>
<keyword id="KW-0503">Monooxygenase</keyword>
<keyword id="KW-0560">Oxidoreductase</keyword>
<keyword id="KW-1185">Reference proteome</keyword>
<name>CP6D1_MUSDO</name>
<feature type="chain" id="PRO_0000051878" description="Cytochrome P450 6d1">
    <location>
        <begin position="1"/>
        <end position="516"/>
    </location>
</feature>
<feature type="binding site" description="axial binding residue" evidence="1">
    <location>
        <position position="461"/>
    </location>
    <ligand>
        <name>heme</name>
        <dbReference type="ChEBI" id="CHEBI:30413"/>
    </ligand>
    <ligandPart>
        <name>Fe</name>
        <dbReference type="ChEBI" id="CHEBI:18248"/>
    </ligandPart>
</feature>
<feature type="sequence variant" description="In allele CYP6D1v3." evidence="5 6">
    <location>
        <position position="2"/>
    </location>
</feature>
<feature type="sequence variant" description="In allele CYP6D1v3 and allele CYP6D1v5." evidence="2 5 6">
    <original>M</original>
    <variation>L</variation>
    <location>
        <position position="55"/>
    </location>
</feature>
<feature type="sequence variant" description="In allele CYP6D1v1." evidence="3 4 5 6">
    <original>A</original>
    <variation>D</variation>
    <location>
        <position position="150"/>
    </location>
</feature>
<feature type="sequence variant" description="In allele CYP6D1v1." evidence="3 4 5 6">
    <original>L</original>
    <variation>I</variation>
    <location>
        <position position="153"/>
    </location>
</feature>
<feature type="sequence variant" description="In allele CYP6D1v1." evidence="3 4 5 6">
    <original>S</original>
    <variation>T</variation>
    <location>
        <position position="165"/>
    </location>
</feature>
<feature type="sequence variant" description="In allele CYP6D1v5." evidence="6">
    <original>I</original>
    <variation>N</variation>
    <location>
        <position position="182"/>
    </location>
</feature>
<feature type="sequence variant" description="In allele CYP6D1v5 and allele CYP6D1v1." evidence="3 4 5 6">
    <original>Q</original>
    <variation>E</variation>
    <location>
        <position position="218"/>
    </location>
</feature>
<feature type="sequence variant" description="In allele CYP6D1v1." evidence="3 4 5 6">
    <original>F</original>
    <variation>I</variation>
    <location>
        <position position="220"/>
    </location>
</feature>
<feature type="sequence variant" description="In allele CYP6D1v5 and allele CYP6D1v1." evidence="3 4 5 6">
    <original>NFI</original>
    <variation>TFM</variation>
    <location>
        <begin position="225"/>
        <end position="227"/>
    </location>
</feature>
<feature type="sequence variant" description="In allele CYP6D1v5." evidence="6">
    <original>K</original>
    <variation>T</variation>
    <location>
        <position position="262"/>
    </location>
</feature>
<feature type="sequence variant" description="In allele CYP6D1v3." evidence="5 6">
    <original>R</original>
    <variation>P</variation>
    <location>
        <position position="266"/>
    </location>
</feature>
<feature type="sequence variant" description="In allele CYP6D1v5." evidence="6">
    <original>D</original>
    <variation>N</variation>
    <location>
        <position position="447"/>
    </location>
</feature>
<feature type="sequence variant" description="In allele CYP6D1v4, allele CYP6D1v5 and allele CYP6D1v1." evidence="3 4 5 6">
    <original>M</original>
    <variation>I</variation>
    <location>
        <position position="469"/>
    </location>
</feature>
<evidence type="ECO:0000250" key="1"/>
<evidence type="ECO:0000269" key="2">
    <source>
    </source>
</evidence>
<evidence type="ECO:0000269" key="3">
    <source>
    </source>
</evidence>
<evidence type="ECO:0000269" key="4">
    <source>
    </source>
</evidence>
<evidence type="ECO:0000269" key="5">
    <source>
    </source>
</evidence>
<evidence type="ECO:0000269" key="6">
    <source>
    </source>
</evidence>
<evidence type="ECO:0000305" key="7"/>
<reference key="1">
    <citation type="journal article" date="1995" name="Insect Mol. Biol.">
        <title>Molecular mechanisms involved in increased expression of a cytochrome P450 responsible for pyrethroid resistance in the housefly, Musca domestica.</title>
        <authorList>
            <person name="Tomita T."/>
            <person name="Liu N."/>
            <person name="Smith F.F."/>
            <person name="Sridhar P."/>
            <person name="Scott J.G."/>
        </authorList>
    </citation>
    <scope>NUCLEOTIDE SEQUENCE [MRNA]</scope>
    <scope>VARIANTS LEU-2 DEL; LEU-55; ASP-150; ILE-153; THR-165; GLU-218; ILE-220; 225-ASN--ILE-227 DELINS THR-PHE-MET; PRO-266 AND ILE-469</scope>
    <source>
        <strain>aabys</strain>
        <strain>CS</strain>
        <strain>ISK</strain>
        <strain>LPR</strain>
    </source>
</reference>
<reference key="2">
    <citation type="journal article" date="1999" name="Gene">
        <title>House-fly cytochrome P450 CYP6D1: 5' flanking sequences and comparison of alleles.</title>
        <authorList>
            <person name="Scott J.G."/>
            <person name="Liu N."/>
            <person name="Wen Z."/>
            <person name="Smith F.F."/>
            <person name="Kasai S."/>
            <person name="Horak C.E."/>
        </authorList>
    </citation>
    <scope>NUCLEOTIDE SEQUENCE [MRNA]</scope>
    <scope>VARIANTS LEU-2 DEL; LEU-55; ASP-150; ILE-153; THR-165; ASN-182; GLU-218; ILE-220; 225-ASN--ILE-227 DELINS THR-PHE-MET; THR-262; PRO-266; ASN-447 AND ILE-469</scope>
    <source>
        <strain>aabys</strain>
        <strain>CS</strain>
        <strain>ISK</strain>
        <strain>LPR</strain>
        <strain>OCR</strain>
    </source>
</reference>
<reference key="3">
    <citation type="journal article" date="1995" name="Insect Biochem. Mol. Biol.">
        <title>cDNA and deduced protein sequence of CYP6D1: the putative gene for a cytochrome P450 responsible for pyrethroid resistance in house fly.</title>
        <authorList>
            <person name="Tomita T."/>
            <person name="Scott J.G."/>
        </authorList>
    </citation>
    <scope>NUCLEOTIDE SEQUENCE [MRNA]</scope>
    <scope>PROTEIN SEQUENCE OF 1-31; 100-120; 284-289 AND 411-437</scope>
    <scope>VARIANTS ASP-150; ILE-153; THR-165; GLU-218; ILE-220; 225-ASN--ILE-227 DELINS THR-PHE-MET AND ILE-469</scope>
    <source>
        <strain>LPR</strain>
    </source>
</reference>
<reference key="4">
    <citation type="journal article" date="1995" name="Experientia">
        <title>Allele-specific PCR reveals that CYP6D1 is on chromosome 1 in the house fly, Musca domestica.</title>
        <authorList>
            <person name="Liu N."/>
            <person name="Tomita T."/>
            <person name="Scott J.G."/>
        </authorList>
    </citation>
    <scope>NUCLEOTIDE SEQUENCE [MRNA]</scope>
    <scope>VARIANTS ASP-150; ILE-153; THR-165; GLU-218; ILE-220; 225-ASN--ILE-227 DELINS THR-PHE-MET AND ILE-469</scope>
    <source>
        <strain>LPR</strain>
    </source>
</reference>
<reference key="5">
    <citation type="journal article" date="2001" name="Insect Mol. Biol.">
        <title>Cytochrome P450s CYP6D3 and CYP6D1 are part of a P450 gene cluster on autosome 1 in house fly.</title>
        <authorList>
            <person name="Kasai S."/>
            <person name="Scott J.G."/>
        </authorList>
    </citation>
    <scope>NUCLEOTIDE SEQUENCE OF 1-229</scope>
    <scope>VARIANT LEU-55</scope>
    <source>
        <strain>Edinburgh</strain>
    </source>
</reference>
<accession>Q27698</accession>
<accession>Q27697</accession>
<accession>Q27699</accession>
<accession>Q27700</accession>
<accession>Q9GU29</accession>
<accession>Q9XYB5</accession>
<protein>
    <recommendedName>
        <fullName>Cytochrome P450 6d1</fullName>
        <ecNumber>1.14.-.-</ecNumber>
    </recommendedName>
    <alternativeName>
        <fullName>CYPVID1</fullName>
    </alternativeName>
    <alternativeName>
        <fullName>Cytochrome P450 Ipr</fullName>
    </alternativeName>
    <alternativeName>
        <fullName>Pyrethroid resistance cytochrome P450</fullName>
    </alternativeName>
</protein>
<dbReference type="EC" id="1.14.-.-"/>
<dbReference type="EMBL" id="U22367">
    <property type="protein sequence ID" value="AAC46931.1"/>
    <property type="molecule type" value="mRNA"/>
</dbReference>
<dbReference type="EMBL" id="U22366">
    <property type="protein sequence ID" value="AAC46930.1"/>
    <property type="molecule type" value="mRNA"/>
</dbReference>
<dbReference type="EMBL" id="AF064795">
    <property type="protein sequence ID" value="AAC99341.1"/>
    <property type="molecule type" value="Genomic_DNA"/>
</dbReference>
<dbReference type="EMBL" id="AF081288">
    <property type="protein sequence ID" value="AAD32478.1"/>
    <property type="molecule type" value="mRNA"/>
</dbReference>
<dbReference type="EMBL" id="U22362">
    <property type="protein sequence ID" value="AAC46932.1"/>
    <property type="molecule type" value="mRNA"/>
</dbReference>
<dbReference type="EMBL" id="AF200191">
    <property type="protein sequence ID" value="AAG28564.1"/>
    <property type="molecule type" value="Genomic_DNA"/>
</dbReference>
<dbReference type="EMBL" id="U15168">
    <property type="protein sequence ID" value="AAA81513.1"/>
    <property type="molecule type" value="mRNA"/>
</dbReference>
<dbReference type="EMBL" id="AF064794">
    <property type="protein sequence ID" value="AAC99340.1"/>
    <property type="molecule type" value="Genomic_DNA"/>
</dbReference>
<dbReference type="SMR" id="Q27698"/>
<dbReference type="VEuPathDB" id="VectorBase:MDOA002847"/>
<dbReference type="VEuPathDB" id="VectorBase:MDOMA2_016028"/>
<dbReference type="eggNOG" id="KOG0158">
    <property type="taxonomic scope" value="Eukaryota"/>
</dbReference>
<dbReference type="Proteomes" id="UP000694905">
    <property type="component" value="Unplaced"/>
</dbReference>
<dbReference type="GO" id="GO:0005789">
    <property type="term" value="C:endoplasmic reticulum membrane"/>
    <property type="evidence" value="ECO:0007669"/>
    <property type="project" value="UniProtKB-SubCell"/>
</dbReference>
<dbReference type="GO" id="GO:0020037">
    <property type="term" value="F:heme binding"/>
    <property type="evidence" value="ECO:0007669"/>
    <property type="project" value="InterPro"/>
</dbReference>
<dbReference type="GO" id="GO:0005506">
    <property type="term" value="F:iron ion binding"/>
    <property type="evidence" value="ECO:0007669"/>
    <property type="project" value="InterPro"/>
</dbReference>
<dbReference type="GO" id="GO:0004497">
    <property type="term" value="F:monooxygenase activity"/>
    <property type="evidence" value="ECO:0007669"/>
    <property type="project" value="UniProtKB-KW"/>
</dbReference>
<dbReference type="GO" id="GO:0016705">
    <property type="term" value="F:oxidoreductase activity, acting on paired donors, with incorporation or reduction of molecular oxygen"/>
    <property type="evidence" value="ECO:0007669"/>
    <property type="project" value="InterPro"/>
</dbReference>
<dbReference type="CDD" id="cd11056">
    <property type="entry name" value="CYP6-like"/>
    <property type="match status" value="1"/>
</dbReference>
<dbReference type="FunFam" id="1.10.630.10:FF:000042">
    <property type="entry name" value="Cytochrome P450"/>
    <property type="match status" value="1"/>
</dbReference>
<dbReference type="Gene3D" id="1.10.630.10">
    <property type="entry name" value="Cytochrome P450"/>
    <property type="match status" value="1"/>
</dbReference>
<dbReference type="InterPro" id="IPR001128">
    <property type="entry name" value="Cyt_P450"/>
</dbReference>
<dbReference type="InterPro" id="IPR017972">
    <property type="entry name" value="Cyt_P450_CS"/>
</dbReference>
<dbReference type="InterPro" id="IPR002401">
    <property type="entry name" value="Cyt_P450_E_grp-I"/>
</dbReference>
<dbReference type="InterPro" id="IPR036396">
    <property type="entry name" value="Cyt_P450_sf"/>
</dbReference>
<dbReference type="InterPro" id="IPR050476">
    <property type="entry name" value="Insect_CytP450_Detox"/>
</dbReference>
<dbReference type="PANTHER" id="PTHR24292">
    <property type="entry name" value="CYTOCHROME P450"/>
    <property type="match status" value="1"/>
</dbReference>
<dbReference type="PANTHER" id="PTHR24292:SF93">
    <property type="entry name" value="CYTOCHROME P450 310A1-RELATED"/>
    <property type="match status" value="1"/>
</dbReference>
<dbReference type="Pfam" id="PF00067">
    <property type="entry name" value="p450"/>
    <property type="match status" value="1"/>
</dbReference>
<dbReference type="PRINTS" id="PR00463">
    <property type="entry name" value="EP450I"/>
</dbReference>
<dbReference type="PRINTS" id="PR00385">
    <property type="entry name" value="P450"/>
</dbReference>
<dbReference type="SUPFAM" id="SSF48264">
    <property type="entry name" value="Cytochrome P450"/>
    <property type="match status" value="1"/>
</dbReference>
<dbReference type="PROSITE" id="PS00086">
    <property type="entry name" value="CYTOCHROME_P450"/>
    <property type="match status" value="1"/>
</dbReference>
<gene>
    <name type="primary">CYP6D1</name>
</gene>
<sequence>MLLLLLLIVVTTLYIFAKLHYTKWERLGFESDKATIPLGSMAKVFHKERPFGLVMSDIYDKCHEKVVGIYLFFKPALLVRDAELARQILTTDFNSFHDRGLYVDEKNDPMSANLFVMEGQSWRTLRMKLAPSFSSGKLKGMFETVDDVAAKLLNHLNERLKDGQSHVLEIKSILTTYAVDIIGSVIFGLEIDSFTHPDNEFRVLSDRLFNPKKSTMLQRFRNLSNFICPPLAKLLSRLGAKDPITYRLRDIVKRTIEFREEKGVVRKDLLQLFIQLRNTGKISDDNDKLWHDVESTAENLKAMSIDMIASNSFLFYIAGSETTAATTSFTIYELAMYPEILKKAQSEVDECLQRHGLKPQGRLTYEAIQDMKYLDLCVMETTRKYPGLPFLNRKCTQDFQVPDTKLTIPKETGIIISLLGIHRDPQYFPQPEDYRPERFADESKDYDPAAYMPFGEGPRHCIAQRMGVMNSKVALAKILANFNIQPMPRQEVEFKFHSAPVLVPVNGLNVGLSKRW</sequence>
<comment type="function">
    <text>Metabolizes pyrethroid insecticides and other xenobiotics.</text>
</comment>
<comment type="cofactor">
    <cofactor evidence="1">
        <name>heme</name>
        <dbReference type="ChEBI" id="CHEBI:30413"/>
    </cofactor>
</comment>
<comment type="subcellular location">
    <subcellularLocation>
        <location evidence="7">Endoplasmic reticulum membrane</location>
        <topology evidence="7">Peripheral membrane protein</topology>
    </subcellularLocation>
    <subcellularLocation>
        <location evidence="7">Microsome membrane</location>
        <topology evidence="7">Peripheral membrane protein</topology>
    </subcellularLocation>
</comment>
<comment type="developmental stage">
    <text>Found only in adults and late pupae.</text>
</comment>
<comment type="induction">
    <text>By phenobarbital in susceptible strains (3-fold in CS), but not in the LPR strain.</text>
</comment>
<comment type="polymorphism">
    <text>Alleles from the pyrethroid-susceptible strains CS (CYP6D1v2) (shown here), aabys (CYP6D1v3), ISK (CYP6D1v4), OCR (CYP6D1v5) and Edinburgh, and one allele from the pyrethroid-resistant strain LPR (CYP6D1v1) are described here.</text>
</comment>
<comment type="miscellaneous">
    <text>Expressed at higher levels in LPR compared to susceptible flies, it is responsible for monooxygenase-mediated pyrethroid resistance.</text>
</comment>
<comment type="similarity">
    <text evidence="7">Belongs to the cytochrome P450 family.</text>
</comment>